<protein>
    <recommendedName>
        <fullName evidence="1">Ribonuclease 3</fullName>
        <ecNumber evidence="1">3.1.26.3</ecNumber>
    </recommendedName>
    <alternativeName>
        <fullName evidence="1">Ribonuclease III</fullName>
        <shortName evidence="1">RNase III</shortName>
    </alternativeName>
</protein>
<reference key="1">
    <citation type="journal article" date="2003" name="Nature">
        <title>The genome sequence of Bacillus anthracis Ames and comparison to closely related bacteria.</title>
        <authorList>
            <person name="Read T.D."/>
            <person name="Peterson S.N."/>
            <person name="Tourasse N.J."/>
            <person name="Baillie L.W."/>
            <person name="Paulsen I.T."/>
            <person name="Nelson K.E."/>
            <person name="Tettelin H."/>
            <person name="Fouts D.E."/>
            <person name="Eisen J.A."/>
            <person name="Gill S.R."/>
            <person name="Holtzapple E.K."/>
            <person name="Okstad O.A."/>
            <person name="Helgason E."/>
            <person name="Rilstone J."/>
            <person name="Wu M."/>
            <person name="Kolonay J.F."/>
            <person name="Beanan M.J."/>
            <person name="Dodson R.J."/>
            <person name="Brinkac L.M."/>
            <person name="Gwinn M.L."/>
            <person name="DeBoy R.T."/>
            <person name="Madpu R."/>
            <person name="Daugherty S.C."/>
            <person name="Durkin A.S."/>
            <person name="Haft D.H."/>
            <person name="Nelson W.C."/>
            <person name="Peterson J.D."/>
            <person name="Pop M."/>
            <person name="Khouri H.M."/>
            <person name="Radune D."/>
            <person name="Benton J.L."/>
            <person name="Mahamoud Y."/>
            <person name="Jiang L."/>
            <person name="Hance I.R."/>
            <person name="Weidman J.F."/>
            <person name="Berry K.J."/>
            <person name="Plaut R.D."/>
            <person name="Wolf A.M."/>
            <person name="Watkins K.L."/>
            <person name="Nierman W.C."/>
            <person name="Hazen A."/>
            <person name="Cline R.T."/>
            <person name="Redmond C."/>
            <person name="Thwaite J.E."/>
            <person name="White O."/>
            <person name="Salzberg S.L."/>
            <person name="Thomason B."/>
            <person name="Friedlander A.M."/>
            <person name="Koehler T.M."/>
            <person name="Hanna P.C."/>
            <person name="Kolstoe A.-B."/>
            <person name="Fraser C.M."/>
        </authorList>
    </citation>
    <scope>NUCLEOTIDE SEQUENCE [LARGE SCALE GENOMIC DNA]</scope>
    <source>
        <strain>Ames / isolate Porton</strain>
    </source>
</reference>
<reference key="2">
    <citation type="journal article" date="2009" name="J. Bacteriol.">
        <title>The complete genome sequence of Bacillus anthracis Ames 'Ancestor'.</title>
        <authorList>
            <person name="Ravel J."/>
            <person name="Jiang L."/>
            <person name="Stanley S.T."/>
            <person name="Wilson M.R."/>
            <person name="Decker R.S."/>
            <person name="Read T.D."/>
            <person name="Worsham P."/>
            <person name="Keim P.S."/>
            <person name="Salzberg S.L."/>
            <person name="Fraser-Liggett C.M."/>
            <person name="Rasko D.A."/>
        </authorList>
    </citation>
    <scope>NUCLEOTIDE SEQUENCE [LARGE SCALE GENOMIC DNA]</scope>
    <source>
        <strain>Ames ancestor</strain>
    </source>
</reference>
<reference key="3">
    <citation type="submission" date="2004-01" db="EMBL/GenBank/DDBJ databases">
        <title>Complete genome sequence of Bacillus anthracis Sterne.</title>
        <authorList>
            <person name="Brettin T.S."/>
            <person name="Bruce D."/>
            <person name="Challacombe J.F."/>
            <person name="Gilna P."/>
            <person name="Han C."/>
            <person name="Hill K."/>
            <person name="Hitchcock P."/>
            <person name="Jackson P."/>
            <person name="Keim P."/>
            <person name="Longmire J."/>
            <person name="Lucas S."/>
            <person name="Okinaka R."/>
            <person name="Richardson P."/>
            <person name="Rubin E."/>
            <person name="Tice H."/>
        </authorList>
    </citation>
    <scope>NUCLEOTIDE SEQUENCE [LARGE SCALE GENOMIC DNA]</scope>
    <source>
        <strain>Sterne</strain>
    </source>
</reference>
<organism>
    <name type="scientific">Bacillus anthracis</name>
    <dbReference type="NCBI Taxonomy" id="1392"/>
    <lineage>
        <taxon>Bacteria</taxon>
        <taxon>Bacillati</taxon>
        <taxon>Bacillota</taxon>
        <taxon>Bacilli</taxon>
        <taxon>Bacillales</taxon>
        <taxon>Bacillaceae</taxon>
        <taxon>Bacillus</taxon>
        <taxon>Bacillus cereus group</taxon>
    </lineage>
</organism>
<evidence type="ECO:0000255" key="1">
    <source>
        <dbReference type="HAMAP-Rule" id="MF_00104"/>
    </source>
</evidence>
<sequence>MPYRKYREKKYETKYREAFKLFQEKIGITFTDEKLLIQAFTHSSYVNEHRKKPHEDNERLEFLGDAVLELTVSQYLFQKYPTMSEGELTKLRAAIVCEPSLVRFANELSFGSLVLLGKGEEMTGGRERPALLADVFEAFIGALYLDQGLETVWGFLKEIVYPKINEGAFSHVMDYKSQLQELIQRDGSGNIEYQILQEKGPAHNREFVSRVTLNNVALGLGSGKSKKEAEQQAAAEALKKLKEQL</sequence>
<gene>
    <name evidence="1" type="primary">rnc</name>
    <name type="synonym">rncS</name>
    <name type="ordered locus">BA_3987</name>
    <name type="ordered locus">GBAA_3987</name>
    <name type="ordered locus">BAS3700</name>
</gene>
<comment type="function">
    <text evidence="1">Digests double-stranded RNA. Involved in the processing of primary rRNA transcript to yield the immediate precursors to the large and small rRNAs (23S and 16S). Processes some mRNAs, and tRNAs when they are encoded in the rRNA operon. Processes pre-crRNA and tracrRNA of type II CRISPR loci if present in the organism.</text>
</comment>
<comment type="catalytic activity">
    <reaction evidence="1">
        <text>Endonucleolytic cleavage to 5'-phosphomonoester.</text>
        <dbReference type="EC" id="3.1.26.3"/>
    </reaction>
</comment>
<comment type="cofactor">
    <cofactor evidence="1">
        <name>Mg(2+)</name>
        <dbReference type="ChEBI" id="CHEBI:18420"/>
    </cofactor>
</comment>
<comment type="subunit">
    <text evidence="1">Homodimer.</text>
</comment>
<comment type="subcellular location">
    <subcellularLocation>
        <location evidence="1">Cytoplasm</location>
    </subcellularLocation>
</comment>
<comment type="similarity">
    <text evidence="1">Belongs to the ribonuclease III family.</text>
</comment>
<feature type="chain" id="PRO_0000180372" description="Ribonuclease 3">
    <location>
        <begin position="1"/>
        <end position="245"/>
    </location>
</feature>
<feature type="domain" description="RNase III" evidence="1">
    <location>
        <begin position="19"/>
        <end position="148"/>
    </location>
</feature>
<feature type="domain" description="DRBM" evidence="1">
    <location>
        <begin position="174"/>
        <end position="243"/>
    </location>
</feature>
<feature type="active site" evidence="1">
    <location>
        <position position="65"/>
    </location>
</feature>
<feature type="active site" evidence="1">
    <location>
        <position position="137"/>
    </location>
</feature>
<feature type="binding site" evidence="1">
    <location>
        <position position="61"/>
    </location>
    <ligand>
        <name>Mg(2+)</name>
        <dbReference type="ChEBI" id="CHEBI:18420"/>
    </ligand>
</feature>
<feature type="binding site" evidence="1">
    <location>
        <position position="134"/>
    </location>
    <ligand>
        <name>Mg(2+)</name>
        <dbReference type="ChEBI" id="CHEBI:18420"/>
    </ligand>
</feature>
<feature type="binding site" evidence="1">
    <location>
        <position position="137"/>
    </location>
    <ligand>
        <name>Mg(2+)</name>
        <dbReference type="ChEBI" id="CHEBI:18420"/>
    </ligand>
</feature>
<dbReference type="EC" id="3.1.26.3" evidence="1"/>
<dbReference type="EMBL" id="AE016879">
    <property type="protein sequence ID" value="AAP27715.1"/>
    <property type="molecule type" value="Genomic_DNA"/>
</dbReference>
<dbReference type="EMBL" id="AE017334">
    <property type="protein sequence ID" value="AAT33102.1"/>
    <property type="molecule type" value="Genomic_DNA"/>
</dbReference>
<dbReference type="EMBL" id="AE017225">
    <property type="protein sequence ID" value="AAT56002.1"/>
    <property type="molecule type" value="Genomic_DNA"/>
</dbReference>
<dbReference type="RefSeq" id="NP_846229.1">
    <property type="nucleotide sequence ID" value="NC_003997.3"/>
</dbReference>
<dbReference type="RefSeq" id="WP_001146873.1">
    <property type="nucleotide sequence ID" value="NZ_WXXJ01000026.1"/>
</dbReference>
<dbReference type="RefSeq" id="YP_029951.1">
    <property type="nucleotide sequence ID" value="NC_005945.1"/>
</dbReference>
<dbReference type="SMR" id="Q81WI8"/>
<dbReference type="STRING" id="261594.GBAA_3987"/>
<dbReference type="DNASU" id="1087539"/>
<dbReference type="GeneID" id="45023677"/>
<dbReference type="KEGG" id="ban:BA_3987"/>
<dbReference type="KEGG" id="bar:GBAA_3987"/>
<dbReference type="KEGG" id="bat:BAS3700"/>
<dbReference type="PATRIC" id="fig|198094.11.peg.3957"/>
<dbReference type="eggNOG" id="COG0571">
    <property type="taxonomic scope" value="Bacteria"/>
</dbReference>
<dbReference type="HOGENOM" id="CLU_000907_1_3_9"/>
<dbReference type="OMA" id="LTHKSCK"/>
<dbReference type="OrthoDB" id="9805026at2"/>
<dbReference type="Proteomes" id="UP000000427">
    <property type="component" value="Chromosome"/>
</dbReference>
<dbReference type="Proteomes" id="UP000000594">
    <property type="component" value="Chromosome"/>
</dbReference>
<dbReference type="GO" id="GO:0005737">
    <property type="term" value="C:cytoplasm"/>
    <property type="evidence" value="ECO:0007669"/>
    <property type="project" value="UniProtKB-SubCell"/>
</dbReference>
<dbReference type="GO" id="GO:0003725">
    <property type="term" value="F:double-stranded RNA binding"/>
    <property type="evidence" value="ECO:0007669"/>
    <property type="project" value="TreeGrafter"/>
</dbReference>
<dbReference type="GO" id="GO:0046872">
    <property type="term" value="F:metal ion binding"/>
    <property type="evidence" value="ECO:0007669"/>
    <property type="project" value="UniProtKB-KW"/>
</dbReference>
<dbReference type="GO" id="GO:0004525">
    <property type="term" value="F:ribonuclease III activity"/>
    <property type="evidence" value="ECO:0007669"/>
    <property type="project" value="UniProtKB-UniRule"/>
</dbReference>
<dbReference type="GO" id="GO:0019843">
    <property type="term" value="F:rRNA binding"/>
    <property type="evidence" value="ECO:0007669"/>
    <property type="project" value="UniProtKB-KW"/>
</dbReference>
<dbReference type="GO" id="GO:0006397">
    <property type="term" value="P:mRNA processing"/>
    <property type="evidence" value="ECO:0007669"/>
    <property type="project" value="UniProtKB-UniRule"/>
</dbReference>
<dbReference type="GO" id="GO:0010468">
    <property type="term" value="P:regulation of gene expression"/>
    <property type="evidence" value="ECO:0007669"/>
    <property type="project" value="TreeGrafter"/>
</dbReference>
<dbReference type="GO" id="GO:0006364">
    <property type="term" value="P:rRNA processing"/>
    <property type="evidence" value="ECO:0007669"/>
    <property type="project" value="UniProtKB-UniRule"/>
</dbReference>
<dbReference type="GO" id="GO:0008033">
    <property type="term" value="P:tRNA processing"/>
    <property type="evidence" value="ECO:0007669"/>
    <property type="project" value="UniProtKB-KW"/>
</dbReference>
<dbReference type="CDD" id="cd10845">
    <property type="entry name" value="DSRM_RNAse_III_family"/>
    <property type="match status" value="1"/>
</dbReference>
<dbReference type="CDD" id="cd00593">
    <property type="entry name" value="RIBOc"/>
    <property type="match status" value="1"/>
</dbReference>
<dbReference type="FunFam" id="1.10.1520.10:FF:000001">
    <property type="entry name" value="Ribonuclease 3"/>
    <property type="match status" value="1"/>
</dbReference>
<dbReference type="FunFam" id="3.30.160.20:FF:000003">
    <property type="entry name" value="Ribonuclease 3"/>
    <property type="match status" value="1"/>
</dbReference>
<dbReference type="Gene3D" id="3.30.160.20">
    <property type="match status" value="1"/>
</dbReference>
<dbReference type="Gene3D" id="1.10.1520.10">
    <property type="entry name" value="Ribonuclease III domain"/>
    <property type="match status" value="1"/>
</dbReference>
<dbReference type="HAMAP" id="MF_00104">
    <property type="entry name" value="RNase_III"/>
    <property type="match status" value="1"/>
</dbReference>
<dbReference type="InterPro" id="IPR014720">
    <property type="entry name" value="dsRBD_dom"/>
</dbReference>
<dbReference type="InterPro" id="IPR011907">
    <property type="entry name" value="RNase_III"/>
</dbReference>
<dbReference type="InterPro" id="IPR000999">
    <property type="entry name" value="RNase_III_dom"/>
</dbReference>
<dbReference type="InterPro" id="IPR036389">
    <property type="entry name" value="RNase_III_sf"/>
</dbReference>
<dbReference type="NCBIfam" id="TIGR02191">
    <property type="entry name" value="RNaseIII"/>
    <property type="match status" value="1"/>
</dbReference>
<dbReference type="PANTHER" id="PTHR11207:SF0">
    <property type="entry name" value="RIBONUCLEASE 3"/>
    <property type="match status" value="1"/>
</dbReference>
<dbReference type="PANTHER" id="PTHR11207">
    <property type="entry name" value="RIBONUCLEASE III"/>
    <property type="match status" value="1"/>
</dbReference>
<dbReference type="Pfam" id="PF00035">
    <property type="entry name" value="dsrm"/>
    <property type="match status" value="1"/>
</dbReference>
<dbReference type="Pfam" id="PF14622">
    <property type="entry name" value="Ribonucleas_3_3"/>
    <property type="match status" value="1"/>
</dbReference>
<dbReference type="SMART" id="SM00358">
    <property type="entry name" value="DSRM"/>
    <property type="match status" value="1"/>
</dbReference>
<dbReference type="SMART" id="SM00535">
    <property type="entry name" value="RIBOc"/>
    <property type="match status" value="1"/>
</dbReference>
<dbReference type="SUPFAM" id="SSF54768">
    <property type="entry name" value="dsRNA-binding domain-like"/>
    <property type="match status" value="1"/>
</dbReference>
<dbReference type="SUPFAM" id="SSF69065">
    <property type="entry name" value="RNase III domain-like"/>
    <property type="match status" value="1"/>
</dbReference>
<dbReference type="PROSITE" id="PS50137">
    <property type="entry name" value="DS_RBD"/>
    <property type="match status" value="1"/>
</dbReference>
<dbReference type="PROSITE" id="PS00517">
    <property type="entry name" value="RNASE_3_1"/>
    <property type="match status" value="1"/>
</dbReference>
<dbReference type="PROSITE" id="PS50142">
    <property type="entry name" value="RNASE_3_2"/>
    <property type="match status" value="1"/>
</dbReference>
<name>RNC_BACAN</name>
<accession>Q81WI8</accession>
<accession>Q6HUN7</accession>
<accession>Q6KNX0</accession>
<keyword id="KW-0963">Cytoplasm</keyword>
<keyword id="KW-0255">Endonuclease</keyword>
<keyword id="KW-0378">Hydrolase</keyword>
<keyword id="KW-0460">Magnesium</keyword>
<keyword id="KW-0479">Metal-binding</keyword>
<keyword id="KW-0507">mRNA processing</keyword>
<keyword id="KW-0540">Nuclease</keyword>
<keyword id="KW-1185">Reference proteome</keyword>
<keyword id="KW-0694">RNA-binding</keyword>
<keyword id="KW-0698">rRNA processing</keyword>
<keyword id="KW-0699">rRNA-binding</keyword>
<keyword id="KW-0819">tRNA processing</keyword>
<proteinExistence type="inferred from homology"/>